<evidence type="ECO:0000250" key="1"/>
<evidence type="ECO:0000250" key="2">
    <source>
        <dbReference type="UniProtKB" id="Q969G6"/>
    </source>
</evidence>
<evidence type="ECO:0000305" key="3"/>
<accession>A5E1A0</accession>
<proteinExistence type="inferred from homology"/>
<keyword id="KW-0067">ATP-binding</keyword>
<keyword id="KW-0285">Flavoprotein</keyword>
<keyword id="KW-0288">FMN</keyword>
<keyword id="KW-0418">Kinase</keyword>
<keyword id="KW-0460">Magnesium</keyword>
<keyword id="KW-0479">Metal-binding</keyword>
<keyword id="KW-0547">Nucleotide-binding</keyword>
<keyword id="KW-1185">Reference proteome</keyword>
<keyword id="KW-0808">Transferase</keyword>
<keyword id="KW-0862">Zinc</keyword>
<organism>
    <name type="scientific">Lodderomyces elongisporus (strain ATCC 11503 / CBS 2605 / JCM 1781 / NBRC 1676 / NRRL YB-4239)</name>
    <name type="common">Yeast</name>
    <name type="synonym">Saccharomyces elongisporus</name>
    <dbReference type="NCBI Taxonomy" id="379508"/>
    <lineage>
        <taxon>Eukaryota</taxon>
        <taxon>Fungi</taxon>
        <taxon>Dikarya</taxon>
        <taxon>Ascomycota</taxon>
        <taxon>Saccharomycotina</taxon>
        <taxon>Pichiomycetes</taxon>
        <taxon>Debaryomycetaceae</taxon>
        <taxon>Candida/Lodderomyces clade</taxon>
        <taxon>Lodderomyces</taxon>
    </lineage>
</organism>
<name>RIFK_LODEL</name>
<protein>
    <recommendedName>
        <fullName>Riboflavin kinase</fullName>
        <ecNumber>2.7.1.26</ecNumber>
    </recommendedName>
    <alternativeName>
        <fullName>Flavin mononucleotide kinase 1</fullName>
    </alternativeName>
</protein>
<sequence length="182" mass="20838">MTRPETIIPEKPTSPYPIHTTAPIISGFGRGSSELGIPTANIPINAQLNSLPTGIYYGWCKIHPVSDQNDETRTRPDGQLILFNHGNKLQANELVVHPMVMSIGWNPFYQNKEKAAEIHIMSKFERDFYGAELEFIVLGYVRPELDYTTKEALIEDILTDIRISRDILENKEEYTKYKKELE</sequence>
<gene>
    <name type="primary">FMN1</name>
    <name type="ORF">LELG_03387</name>
</gene>
<reference key="1">
    <citation type="journal article" date="2009" name="Nature">
        <title>Evolution of pathogenicity and sexual reproduction in eight Candida genomes.</title>
        <authorList>
            <person name="Butler G."/>
            <person name="Rasmussen M.D."/>
            <person name="Lin M.F."/>
            <person name="Santos M.A.S."/>
            <person name="Sakthikumar S."/>
            <person name="Munro C.A."/>
            <person name="Rheinbay E."/>
            <person name="Grabherr M."/>
            <person name="Forche A."/>
            <person name="Reedy J.L."/>
            <person name="Agrafioti I."/>
            <person name="Arnaud M.B."/>
            <person name="Bates S."/>
            <person name="Brown A.J.P."/>
            <person name="Brunke S."/>
            <person name="Costanzo M.C."/>
            <person name="Fitzpatrick D.A."/>
            <person name="de Groot P.W.J."/>
            <person name="Harris D."/>
            <person name="Hoyer L.L."/>
            <person name="Hube B."/>
            <person name="Klis F.M."/>
            <person name="Kodira C."/>
            <person name="Lennard N."/>
            <person name="Logue M.E."/>
            <person name="Martin R."/>
            <person name="Neiman A.M."/>
            <person name="Nikolaou E."/>
            <person name="Quail M.A."/>
            <person name="Quinn J."/>
            <person name="Santos M.C."/>
            <person name="Schmitzberger F.F."/>
            <person name="Sherlock G."/>
            <person name="Shah P."/>
            <person name="Silverstein K.A.T."/>
            <person name="Skrzypek M.S."/>
            <person name="Soll D."/>
            <person name="Staggs R."/>
            <person name="Stansfield I."/>
            <person name="Stumpf M.P.H."/>
            <person name="Sudbery P.E."/>
            <person name="Srikantha T."/>
            <person name="Zeng Q."/>
            <person name="Berman J."/>
            <person name="Berriman M."/>
            <person name="Heitman J."/>
            <person name="Gow N.A.R."/>
            <person name="Lorenz M.C."/>
            <person name="Birren B.W."/>
            <person name="Kellis M."/>
            <person name="Cuomo C.A."/>
        </authorList>
    </citation>
    <scope>NUCLEOTIDE SEQUENCE [LARGE SCALE GENOMIC DNA]</scope>
    <source>
        <strain>ATCC 11503 / BCRC 21390 / CBS 2605 / JCM 1781 / NBRC 1676 / NRRL YB-4239</strain>
    </source>
</reference>
<comment type="function">
    <text evidence="1">Catalyzes the phosphorylation of riboflavin (vitamin B2) to form flavin mononucleotide (FMN) coenzyme.</text>
</comment>
<comment type="catalytic activity">
    <reaction>
        <text>riboflavin + ATP = FMN + ADP + H(+)</text>
        <dbReference type="Rhea" id="RHEA:14357"/>
        <dbReference type="ChEBI" id="CHEBI:15378"/>
        <dbReference type="ChEBI" id="CHEBI:30616"/>
        <dbReference type="ChEBI" id="CHEBI:57986"/>
        <dbReference type="ChEBI" id="CHEBI:58210"/>
        <dbReference type="ChEBI" id="CHEBI:456216"/>
        <dbReference type="EC" id="2.7.1.26"/>
    </reaction>
</comment>
<comment type="cofactor">
    <cofactor evidence="1">
        <name>Zn(2+)</name>
        <dbReference type="ChEBI" id="CHEBI:29105"/>
    </cofactor>
    <cofactor evidence="1">
        <name>Mg(2+)</name>
        <dbReference type="ChEBI" id="CHEBI:18420"/>
    </cofactor>
    <text evidence="1">Zinc or magnesium.</text>
</comment>
<comment type="pathway">
    <text>Cofactor biosynthesis; FMN biosynthesis; FMN from riboflavin (ATP route): step 1/1.</text>
</comment>
<comment type="similarity">
    <text evidence="3">Belongs to the flavokinase family.</text>
</comment>
<dbReference type="EC" id="2.7.1.26"/>
<dbReference type="EMBL" id="CH981527">
    <property type="protein sequence ID" value="EDK45208.1"/>
    <property type="molecule type" value="Genomic_DNA"/>
</dbReference>
<dbReference type="RefSeq" id="XP_001525459.1">
    <property type="nucleotide sequence ID" value="XM_001525409.1"/>
</dbReference>
<dbReference type="SMR" id="A5E1A0"/>
<dbReference type="FunCoup" id="A5E1A0">
    <property type="interactions" value="369"/>
</dbReference>
<dbReference type="STRING" id="379508.A5E1A0"/>
<dbReference type="GeneID" id="5232703"/>
<dbReference type="KEGG" id="lel:PVL30_002884"/>
<dbReference type="VEuPathDB" id="FungiDB:LELG_03387"/>
<dbReference type="eggNOG" id="KOG3110">
    <property type="taxonomic scope" value="Eukaryota"/>
</dbReference>
<dbReference type="HOGENOM" id="CLU_048437_3_2_1"/>
<dbReference type="InParanoid" id="A5E1A0"/>
<dbReference type="OMA" id="NGEVHKM"/>
<dbReference type="OrthoDB" id="276388at2759"/>
<dbReference type="UniPathway" id="UPA00276">
    <property type="reaction ID" value="UER00406"/>
</dbReference>
<dbReference type="Proteomes" id="UP000001996">
    <property type="component" value="Unassembled WGS sequence"/>
</dbReference>
<dbReference type="GO" id="GO:0005739">
    <property type="term" value="C:mitochondrion"/>
    <property type="evidence" value="ECO:0007669"/>
    <property type="project" value="TreeGrafter"/>
</dbReference>
<dbReference type="GO" id="GO:0005524">
    <property type="term" value="F:ATP binding"/>
    <property type="evidence" value="ECO:0007669"/>
    <property type="project" value="UniProtKB-KW"/>
</dbReference>
<dbReference type="GO" id="GO:0046872">
    <property type="term" value="F:metal ion binding"/>
    <property type="evidence" value="ECO:0007669"/>
    <property type="project" value="UniProtKB-KW"/>
</dbReference>
<dbReference type="GO" id="GO:0008531">
    <property type="term" value="F:riboflavin kinase activity"/>
    <property type="evidence" value="ECO:0007669"/>
    <property type="project" value="UniProtKB-EC"/>
</dbReference>
<dbReference type="GO" id="GO:0009398">
    <property type="term" value="P:FMN biosynthetic process"/>
    <property type="evidence" value="ECO:0007669"/>
    <property type="project" value="UniProtKB-UniPathway"/>
</dbReference>
<dbReference type="GO" id="GO:0009231">
    <property type="term" value="P:riboflavin biosynthetic process"/>
    <property type="evidence" value="ECO:0007669"/>
    <property type="project" value="InterPro"/>
</dbReference>
<dbReference type="Gene3D" id="2.40.30.30">
    <property type="entry name" value="Riboflavin kinase-like"/>
    <property type="match status" value="1"/>
</dbReference>
<dbReference type="InterPro" id="IPR023468">
    <property type="entry name" value="Riboflavin_kinase"/>
</dbReference>
<dbReference type="InterPro" id="IPR015865">
    <property type="entry name" value="Riboflavin_kinase_bac/euk"/>
</dbReference>
<dbReference type="InterPro" id="IPR023465">
    <property type="entry name" value="Riboflavin_kinase_dom_sf"/>
</dbReference>
<dbReference type="PANTHER" id="PTHR22749:SF6">
    <property type="entry name" value="RIBOFLAVIN KINASE"/>
    <property type="match status" value="1"/>
</dbReference>
<dbReference type="PANTHER" id="PTHR22749">
    <property type="entry name" value="RIBOFLAVIN KINASE/FMN ADENYLYLTRANSFERASE"/>
    <property type="match status" value="1"/>
</dbReference>
<dbReference type="Pfam" id="PF01687">
    <property type="entry name" value="Flavokinase"/>
    <property type="match status" value="1"/>
</dbReference>
<dbReference type="SMART" id="SM00904">
    <property type="entry name" value="Flavokinase"/>
    <property type="match status" value="1"/>
</dbReference>
<dbReference type="SUPFAM" id="SSF82114">
    <property type="entry name" value="Riboflavin kinase-like"/>
    <property type="match status" value="1"/>
</dbReference>
<feature type="chain" id="PRO_0000301843" description="Riboflavin kinase">
    <location>
        <begin position="1"/>
        <end position="182"/>
    </location>
</feature>
<feature type="active site" description="Nucleophile" evidence="1">
    <location>
        <position position="117"/>
    </location>
</feature>
<feature type="binding site" evidence="2">
    <location>
        <position position="39"/>
    </location>
    <ligand>
        <name>Mg(2+)</name>
        <dbReference type="ChEBI" id="CHEBI:18420"/>
    </ligand>
</feature>
<feature type="binding site" evidence="2">
    <location>
        <position position="41"/>
    </location>
    <ligand>
        <name>Mg(2+)</name>
        <dbReference type="ChEBI" id="CHEBI:18420"/>
    </ligand>
</feature>